<feature type="chain" id="PRO_0000134389" description="MEMO1 family protein Saci_0089">
    <location>
        <begin position="1"/>
        <end position="284"/>
    </location>
</feature>
<gene>
    <name type="ordered locus">Saci_0089</name>
</gene>
<organism>
    <name type="scientific">Sulfolobus acidocaldarius (strain ATCC 33909 / DSM 639 / JCM 8929 / NBRC 15157 / NCIMB 11770)</name>
    <dbReference type="NCBI Taxonomy" id="330779"/>
    <lineage>
        <taxon>Archaea</taxon>
        <taxon>Thermoproteota</taxon>
        <taxon>Thermoprotei</taxon>
        <taxon>Sulfolobales</taxon>
        <taxon>Sulfolobaceae</taxon>
        <taxon>Sulfolobus</taxon>
    </lineage>
</organism>
<sequence length="284" mass="31675">MIRIPAVAGSFYEADPVRLRKQIEWSFLHDLGPKSLPSVPQNKPPQRSNRFFVVPHAGYMYSGPVAAHAYYHLSLEGSPDTVIILGPNHTGLGSYVSIWHKGKWKTPLGEVSVDDEISLELVKLTEIIDIDERAHLYEHSIEVQIPFLQYLFGQNFKIVPIVIMMQTPDVAESLAEGIYKLVSSGKKDIVVLASSDLNHYEPHDKTIEKDNLAIDEIQKLDYKGLFRVVEEKDVTACGYGPIMTVLILAKKLGKKPYVLRHATSGDTSGDKSSVVGYLSVRFGD</sequence>
<protein>
    <recommendedName>
        <fullName evidence="1">MEMO1 family protein Saci_0089</fullName>
    </recommendedName>
</protein>
<proteinExistence type="inferred from homology"/>
<accession>Q4JCG3</accession>
<evidence type="ECO:0000255" key="1">
    <source>
        <dbReference type="HAMAP-Rule" id="MF_00055"/>
    </source>
</evidence>
<keyword id="KW-1185">Reference proteome</keyword>
<dbReference type="EMBL" id="CP000077">
    <property type="protein sequence ID" value="AAY79516.1"/>
    <property type="molecule type" value="Genomic_DNA"/>
</dbReference>
<dbReference type="RefSeq" id="WP_011277017.1">
    <property type="nucleotide sequence ID" value="NC_007181.1"/>
</dbReference>
<dbReference type="SMR" id="Q4JCG3"/>
<dbReference type="STRING" id="330779.Saci_0089"/>
<dbReference type="GeneID" id="14550619"/>
<dbReference type="KEGG" id="sai:Saci_0089"/>
<dbReference type="PATRIC" id="fig|330779.12.peg.83"/>
<dbReference type="eggNOG" id="arCOG01728">
    <property type="taxonomic scope" value="Archaea"/>
</dbReference>
<dbReference type="HOGENOM" id="CLU_038085_2_0_2"/>
<dbReference type="Proteomes" id="UP000001018">
    <property type="component" value="Chromosome"/>
</dbReference>
<dbReference type="CDD" id="cd07361">
    <property type="entry name" value="MEMO_like"/>
    <property type="match status" value="1"/>
</dbReference>
<dbReference type="Gene3D" id="3.40.830.10">
    <property type="entry name" value="LigB-like"/>
    <property type="match status" value="1"/>
</dbReference>
<dbReference type="HAMAP" id="MF_00055">
    <property type="entry name" value="MEMO1"/>
    <property type="match status" value="1"/>
</dbReference>
<dbReference type="InterPro" id="IPR002737">
    <property type="entry name" value="MEMO1_fam"/>
</dbReference>
<dbReference type="NCBIfam" id="TIGR04336">
    <property type="entry name" value="AmmeMemoSam_B"/>
    <property type="match status" value="1"/>
</dbReference>
<dbReference type="NCBIfam" id="NF001987">
    <property type="entry name" value="PRK00782.1"/>
    <property type="match status" value="1"/>
</dbReference>
<dbReference type="PANTHER" id="PTHR11060">
    <property type="entry name" value="PROTEIN MEMO1"/>
    <property type="match status" value="1"/>
</dbReference>
<dbReference type="PANTHER" id="PTHR11060:SF0">
    <property type="entry name" value="PROTEIN MEMO1"/>
    <property type="match status" value="1"/>
</dbReference>
<dbReference type="Pfam" id="PF01875">
    <property type="entry name" value="Memo"/>
    <property type="match status" value="1"/>
</dbReference>
<reference key="1">
    <citation type="journal article" date="2005" name="J. Bacteriol.">
        <title>The genome of Sulfolobus acidocaldarius, a model organism of the Crenarchaeota.</title>
        <authorList>
            <person name="Chen L."/>
            <person name="Bruegger K."/>
            <person name="Skovgaard M."/>
            <person name="Redder P."/>
            <person name="She Q."/>
            <person name="Torarinsson E."/>
            <person name="Greve B."/>
            <person name="Awayez M."/>
            <person name="Zibat A."/>
            <person name="Klenk H.-P."/>
            <person name="Garrett R.A."/>
        </authorList>
    </citation>
    <scope>NUCLEOTIDE SEQUENCE [LARGE SCALE GENOMIC DNA]</scope>
    <source>
        <strain>ATCC 33909 / DSM 639 / JCM 8929 / NBRC 15157 / NCIMB 11770</strain>
    </source>
</reference>
<name>Y089_SULAC</name>
<comment type="similarity">
    <text evidence="1">Belongs to the MEMO1 family.</text>
</comment>